<comment type="function">
    <text evidence="3">Part of the ecpRABCDE operon, which encodes the E.coli common pilus (ECP). ECP is found in both commensal and pathogenic strains and plays a dual role in early-stage biofilm development and host cell recognition. Major subunit of the fimbria.</text>
</comment>
<comment type="subunit">
    <text evidence="1">Self-associates. Forms filaments. Interacts with EcpD (By similarity).</text>
</comment>
<comment type="subcellular location">
    <subcellularLocation>
        <location evidence="1">Fimbrium</location>
    </subcellularLocation>
</comment>
<comment type="induction">
    <text evidence="4">Negatively regulated by H-NS. Positively regulated by IHF and EcpR.</text>
</comment>
<comment type="disruption phenotype">
    <text evidence="3">Deletion mutant lacks ECP production and is impaired in adherence compared with the wild-type strain.</text>
</comment>
<comment type="similarity">
    <text evidence="5">Belongs to the EcpA/MatB fimbrillin family.</text>
</comment>
<evidence type="ECO:0000250" key="1"/>
<evidence type="ECO:0000255" key="2"/>
<evidence type="ECO:0000269" key="3">
    <source>
    </source>
</evidence>
<evidence type="ECO:0000269" key="4">
    <source>
    </source>
</evidence>
<evidence type="ECO:0000305" key="5"/>
<accession>P0AAA4</accession>
<accession>P77264</accession>
<reference key="1">
    <citation type="journal article" date="2001" name="Nature">
        <title>Genome sequence of enterohaemorrhagic Escherichia coli O157:H7.</title>
        <authorList>
            <person name="Perna N.T."/>
            <person name="Plunkett G. III"/>
            <person name="Burland V."/>
            <person name="Mau B."/>
            <person name="Glasner J.D."/>
            <person name="Rose D.J."/>
            <person name="Mayhew G.F."/>
            <person name="Evans P.S."/>
            <person name="Gregor J."/>
            <person name="Kirkpatrick H.A."/>
            <person name="Posfai G."/>
            <person name="Hackett J."/>
            <person name="Klink S."/>
            <person name="Boutin A."/>
            <person name="Shao Y."/>
            <person name="Miller L."/>
            <person name="Grotbeck E.J."/>
            <person name="Davis N.W."/>
            <person name="Lim A."/>
            <person name="Dimalanta E.T."/>
            <person name="Potamousis K."/>
            <person name="Apodaca J."/>
            <person name="Anantharaman T.S."/>
            <person name="Lin J."/>
            <person name="Yen G."/>
            <person name="Schwartz D.C."/>
            <person name="Welch R.A."/>
            <person name="Blattner F.R."/>
        </authorList>
    </citation>
    <scope>NUCLEOTIDE SEQUENCE [LARGE SCALE GENOMIC DNA]</scope>
    <source>
        <strain>O157:H7 / EDL933 / ATCC 700927 / EHEC</strain>
    </source>
</reference>
<reference key="2">
    <citation type="journal article" date="2001" name="DNA Res.">
        <title>Complete genome sequence of enterohemorrhagic Escherichia coli O157:H7 and genomic comparison with a laboratory strain K-12.</title>
        <authorList>
            <person name="Hayashi T."/>
            <person name="Makino K."/>
            <person name="Ohnishi M."/>
            <person name="Kurokawa K."/>
            <person name="Ishii K."/>
            <person name="Yokoyama K."/>
            <person name="Han C.-G."/>
            <person name="Ohtsubo E."/>
            <person name="Nakayama K."/>
            <person name="Murata T."/>
            <person name="Tanaka M."/>
            <person name="Tobe T."/>
            <person name="Iida T."/>
            <person name="Takami H."/>
            <person name="Honda T."/>
            <person name="Sasakawa C."/>
            <person name="Ogasawara N."/>
            <person name="Yasunaga T."/>
            <person name="Kuhara S."/>
            <person name="Shiba T."/>
            <person name="Hattori M."/>
            <person name="Shinagawa H."/>
        </authorList>
    </citation>
    <scope>NUCLEOTIDE SEQUENCE [LARGE SCALE GENOMIC DNA]</scope>
    <source>
        <strain>O157:H7 / Sakai / RIMD 0509952 / EHEC</strain>
    </source>
</reference>
<reference key="3">
    <citation type="journal article" date="2007" name="Proc. Natl. Acad. Sci. U.S.A.">
        <title>Commensal and pathogenic Escherichia coli use a common pilus adherence factor for epithelial cell colonization.</title>
        <authorList>
            <person name="Rendon M.A."/>
            <person name="Saldana Z."/>
            <person name="Erdem A.L."/>
            <person name="Monteiro-Neto V."/>
            <person name="Vazquez A."/>
            <person name="Kaper J.B."/>
            <person name="Puente J.L."/>
            <person name="Giron J.A."/>
        </authorList>
    </citation>
    <scope>FUNCTION</scope>
    <scope>DISRUPTION PHENOTYPE</scope>
    <scope>GENE NAME</scope>
    <source>
        <strain>O157:H7 / EDL933 / ATCC 700927 / EHEC</strain>
    </source>
</reference>
<reference key="4">
    <citation type="journal article" date="2012" name="J. Bacteriol.">
        <title>Transcriptional regulation of the ecp operon by EcpR, IHF, and H-NS in attaching and effacing Escherichia coli.</title>
        <authorList>
            <person name="Martinez-Santos V.I."/>
            <person name="Medrano-Lopez A."/>
            <person name="Saldana Z."/>
            <person name="Giron J.A."/>
            <person name="Puente J.L."/>
        </authorList>
    </citation>
    <scope>INDUCTION</scope>
    <source>
        <strain>O157:H7 / EDL933 / ATCC 700927 / EHEC</strain>
    </source>
</reference>
<sequence length="195" mass="20111">MKKKVLAIALVTVFTGMGVAQAADVTAQAVATWSATAKKDTTSKLVVTPLGSLAFQYAEGIKGFNSQKGLFDVAIEGDSTATAFKLTSRLITNTLTQLDTSGSTLNVGVDYNGAAVEKTGDTVMIDTANGVLGGNLSPLANGYNASNRTTAQDGFTFSIISGTTNGTTAVTDYSTLPEGIWSGDVSVQFDATWTS</sequence>
<feature type="signal peptide" evidence="2">
    <location>
        <begin position="1"/>
        <end position="22"/>
    </location>
</feature>
<feature type="chain" id="PRO_0000041956" description="Common pilus major fimbrillin subunit EcpA">
    <location>
        <begin position="23"/>
        <end position="195"/>
    </location>
</feature>
<protein>
    <recommendedName>
        <fullName>Common pilus major fimbrillin subunit EcpA</fullName>
    </recommendedName>
    <alternativeName>
        <fullName>MatB fimbrillin</fullName>
    </alternativeName>
</protein>
<name>ECPA_ECO57</name>
<proteinExistence type="evidence at transcript level"/>
<gene>
    <name type="primary">ecpA</name>
    <name type="synonym">matB</name>
    <name type="synonym">yagZ</name>
    <name type="ordered locus">Z0360</name>
    <name type="ordered locus">ECs0323</name>
</gene>
<keyword id="KW-0281">Fimbrium</keyword>
<keyword id="KW-1185">Reference proteome</keyword>
<keyword id="KW-0732">Signal</keyword>
<organism>
    <name type="scientific">Escherichia coli O157:H7</name>
    <dbReference type="NCBI Taxonomy" id="83334"/>
    <lineage>
        <taxon>Bacteria</taxon>
        <taxon>Pseudomonadati</taxon>
        <taxon>Pseudomonadota</taxon>
        <taxon>Gammaproteobacteria</taxon>
        <taxon>Enterobacterales</taxon>
        <taxon>Enterobacteriaceae</taxon>
        <taxon>Escherichia</taxon>
    </lineage>
</organism>
<dbReference type="EMBL" id="AE005174">
    <property type="protein sequence ID" value="AAG54618.1"/>
    <property type="molecule type" value="Genomic_DNA"/>
</dbReference>
<dbReference type="EMBL" id="BA000007">
    <property type="protein sequence ID" value="BAB33746.1"/>
    <property type="molecule type" value="Genomic_DNA"/>
</dbReference>
<dbReference type="PIR" id="C90669">
    <property type="entry name" value="C90669"/>
</dbReference>
<dbReference type="PIR" id="F85519">
    <property type="entry name" value="F85519"/>
</dbReference>
<dbReference type="RefSeq" id="NP_308350.1">
    <property type="nucleotide sequence ID" value="NC_002695.1"/>
</dbReference>
<dbReference type="RefSeq" id="WP_000730972.1">
    <property type="nucleotide sequence ID" value="NZ_VOAI01000033.1"/>
</dbReference>
<dbReference type="SMR" id="P0AAA4"/>
<dbReference type="STRING" id="155864.Z0360"/>
<dbReference type="GeneID" id="75204620"/>
<dbReference type="GeneID" id="914422"/>
<dbReference type="KEGG" id="ece:Z0360"/>
<dbReference type="KEGG" id="ecs:ECs_0323"/>
<dbReference type="PATRIC" id="fig|386585.9.peg.417"/>
<dbReference type="eggNOG" id="ENOG502Z9JQ">
    <property type="taxonomic scope" value="Bacteria"/>
</dbReference>
<dbReference type="HOGENOM" id="CLU_120328_0_0_6"/>
<dbReference type="OMA" id="AQDQFTF"/>
<dbReference type="Proteomes" id="UP000000558">
    <property type="component" value="Chromosome"/>
</dbReference>
<dbReference type="Proteomes" id="UP000002519">
    <property type="component" value="Chromosome"/>
</dbReference>
<dbReference type="GO" id="GO:0009289">
    <property type="term" value="C:pilus"/>
    <property type="evidence" value="ECO:0007669"/>
    <property type="project" value="UniProtKB-SubCell"/>
</dbReference>
<dbReference type="Gene3D" id="2.60.40.3290">
    <property type="entry name" value="Fimbrial protein EcpA"/>
    <property type="match status" value="1"/>
</dbReference>
<dbReference type="InterPro" id="IPR016514">
    <property type="entry name" value="EcpA"/>
</dbReference>
<dbReference type="InterPro" id="IPR038478">
    <property type="entry name" value="Fimbrillin_EcpA_sf"/>
</dbReference>
<dbReference type="Pfam" id="PF16449">
    <property type="entry name" value="MatB"/>
    <property type="match status" value="1"/>
</dbReference>
<dbReference type="PIRSF" id="PIRSF007320">
    <property type="entry name" value="Fimbrillin_MatB"/>
    <property type="match status" value="1"/>
</dbReference>